<organism>
    <name type="scientific">Ovis aries</name>
    <name type="common">Sheep</name>
    <dbReference type="NCBI Taxonomy" id="9940"/>
    <lineage>
        <taxon>Eukaryota</taxon>
        <taxon>Metazoa</taxon>
        <taxon>Chordata</taxon>
        <taxon>Craniata</taxon>
        <taxon>Vertebrata</taxon>
        <taxon>Euteleostomi</taxon>
        <taxon>Mammalia</taxon>
        <taxon>Eutheria</taxon>
        <taxon>Laurasiatheria</taxon>
        <taxon>Artiodactyla</taxon>
        <taxon>Ruminantia</taxon>
        <taxon>Pecora</taxon>
        <taxon>Bovidae</taxon>
        <taxon>Caprinae</taxon>
        <taxon>Ovis</taxon>
    </lineage>
</organism>
<comment type="function">
    <text evidence="1">EF-1-beta and EF-1-delta stimulate the exchange of GDP bound to EF-1-alpha to GTP.</text>
</comment>
<comment type="subunit">
    <text evidence="1">EF-1 is composed of 4 subunits: alpha, beta, delta, and gamma.</text>
</comment>
<comment type="similarity">
    <text evidence="6">Belongs to the EF-1-beta/EF-1-delta family.</text>
</comment>
<gene>
    <name type="primary">EEF1D</name>
</gene>
<dbReference type="EMBL" id="AF544990">
    <property type="protein sequence ID" value="AAQ11745.1"/>
    <property type="molecule type" value="mRNA"/>
</dbReference>
<dbReference type="RefSeq" id="NP_001009449.1">
    <property type="nucleotide sequence ID" value="NM_001009449.1"/>
</dbReference>
<dbReference type="SMR" id="Q717R8"/>
<dbReference type="STRING" id="9940.ENSOARP00000000109"/>
<dbReference type="PaxDb" id="9940-ENSOARP00000000109"/>
<dbReference type="GeneID" id="443504"/>
<dbReference type="KEGG" id="oas:443504"/>
<dbReference type="CTD" id="1936"/>
<dbReference type="eggNOG" id="KOG1668">
    <property type="taxonomic scope" value="Eukaryota"/>
</dbReference>
<dbReference type="OrthoDB" id="331763at2759"/>
<dbReference type="Proteomes" id="UP000002356">
    <property type="component" value="Unplaced"/>
</dbReference>
<dbReference type="GO" id="GO:0005829">
    <property type="term" value="C:cytosol"/>
    <property type="evidence" value="ECO:0007669"/>
    <property type="project" value="TreeGrafter"/>
</dbReference>
<dbReference type="GO" id="GO:0005853">
    <property type="term" value="C:eukaryotic translation elongation factor 1 complex"/>
    <property type="evidence" value="ECO:0007669"/>
    <property type="project" value="InterPro"/>
</dbReference>
<dbReference type="GO" id="GO:0005085">
    <property type="term" value="F:guanyl-nucleotide exchange factor activity"/>
    <property type="evidence" value="ECO:0007669"/>
    <property type="project" value="TreeGrafter"/>
</dbReference>
<dbReference type="GO" id="GO:0003746">
    <property type="term" value="F:translation elongation factor activity"/>
    <property type="evidence" value="ECO:0007669"/>
    <property type="project" value="UniProtKB-KW"/>
</dbReference>
<dbReference type="CDD" id="cd00292">
    <property type="entry name" value="EF1B"/>
    <property type="match status" value="1"/>
</dbReference>
<dbReference type="FunFam" id="3.30.70.60:FF:000001">
    <property type="entry name" value="Elongation factor 1-beta 1 like"/>
    <property type="match status" value="1"/>
</dbReference>
<dbReference type="Gene3D" id="3.30.70.60">
    <property type="match status" value="1"/>
</dbReference>
<dbReference type="InterPro" id="IPR036219">
    <property type="entry name" value="eEF-1beta-like_sf"/>
</dbReference>
<dbReference type="InterPro" id="IPR018940">
    <property type="entry name" value="EF-1_beta_acid_region_euk"/>
</dbReference>
<dbReference type="InterPro" id="IPR049720">
    <property type="entry name" value="EF1B_bsu/dsu"/>
</dbReference>
<dbReference type="InterPro" id="IPR014038">
    <property type="entry name" value="EF1B_bsu/dsu_GNE"/>
</dbReference>
<dbReference type="InterPro" id="IPR014717">
    <property type="entry name" value="Transl_elong_EF1B/ribsomal_bS6"/>
</dbReference>
<dbReference type="InterPro" id="IPR001326">
    <property type="entry name" value="Transl_elong_EF1B_B/D_CS"/>
</dbReference>
<dbReference type="PANTHER" id="PTHR11595">
    <property type="entry name" value="EF-HAND AND COILED-COIL DOMAIN-CONTAINING FAMILY MEMBER"/>
    <property type="match status" value="1"/>
</dbReference>
<dbReference type="PANTHER" id="PTHR11595:SF26">
    <property type="entry name" value="ELONGATION FACTOR 1-DELTA"/>
    <property type="match status" value="1"/>
</dbReference>
<dbReference type="Pfam" id="PF10587">
    <property type="entry name" value="EF-1_beta_acid"/>
    <property type="match status" value="1"/>
</dbReference>
<dbReference type="Pfam" id="PF00736">
    <property type="entry name" value="EF1_GNE"/>
    <property type="match status" value="1"/>
</dbReference>
<dbReference type="SMART" id="SM01182">
    <property type="entry name" value="EF-1_beta_acid"/>
    <property type="match status" value="1"/>
</dbReference>
<dbReference type="SMART" id="SM00888">
    <property type="entry name" value="EF1_GNE"/>
    <property type="match status" value="1"/>
</dbReference>
<dbReference type="SUPFAM" id="SSF54984">
    <property type="entry name" value="eEF-1beta-like"/>
    <property type="match status" value="1"/>
</dbReference>
<dbReference type="PROSITE" id="PS00824">
    <property type="entry name" value="EF1BD_1"/>
    <property type="match status" value="1"/>
</dbReference>
<dbReference type="PROSITE" id="PS00825">
    <property type="entry name" value="EF1BD_2"/>
    <property type="match status" value="1"/>
</dbReference>
<protein>
    <recommendedName>
        <fullName>Elongation factor 1-delta</fullName>
        <shortName>EF-1-delta</shortName>
    </recommendedName>
</protein>
<proteinExistence type="evidence at transcript level"/>
<sequence length="277" mass="30821">MATNFLVHEKIWFDKFKYDDAERKFYEQMNGPVAGSSRQENGASVILRDIARARENIQKSLAGSAGPGASSGPSGDHSELVTRIASLEVENQSLRGVVQDLQQAVSKLEARLSALEKSSPAHRATTPQTQHVSPMRQVEPPSRKAATATEDDEDDDIDLFGSDEEEDKEAARLREERLRQYAEKKAKKPALVAKSSILLDVKPWDDETDMAQLEACVRSVQLDGLVWGSSKLVPVGYGIRKLQIQCVVECRWGRPLERSHQVEEHVQSVDIAAFNKI</sequence>
<keyword id="KW-0007">Acetylation</keyword>
<keyword id="KW-0251">Elongation factor</keyword>
<keyword id="KW-0597">Phosphoprotein</keyword>
<keyword id="KW-0648">Protein biosynthesis</keyword>
<keyword id="KW-1185">Reference proteome</keyword>
<feature type="initiator methionine" description="Removed" evidence="2">
    <location>
        <position position="1"/>
    </location>
</feature>
<feature type="chain" id="PRO_0000326431" description="Elongation factor 1-delta">
    <location>
        <begin position="2"/>
        <end position="277"/>
    </location>
</feature>
<feature type="region of interest" description="Disordered" evidence="5">
    <location>
        <begin position="113"/>
        <end position="171"/>
    </location>
</feature>
<feature type="compositionally biased region" description="Acidic residues" evidence="5">
    <location>
        <begin position="149"/>
        <end position="168"/>
    </location>
</feature>
<feature type="modified residue" description="N-acetylalanine" evidence="2">
    <location>
        <position position="2"/>
    </location>
</feature>
<feature type="modified residue" description="N6-acetyllysine" evidence="2">
    <location>
        <position position="17"/>
    </location>
</feature>
<feature type="modified residue" description="Phosphoserine" evidence="2">
    <location>
        <position position="37"/>
    </location>
</feature>
<feature type="modified residue" description="Phosphoserine" evidence="2">
    <location>
        <position position="44"/>
    </location>
</feature>
<feature type="modified residue" description="Phosphoserine" evidence="2">
    <location>
        <position position="60"/>
    </location>
</feature>
<feature type="modified residue" description="Phosphoserine" evidence="2">
    <location>
        <position position="86"/>
    </location>
</feature>
<feature type="modified residue" description="Phosphoserine" evidence="4">
    <location>
        <position position="106"/>
    </location>
</feature>
<feature type="modified residue" description="N6-acetyllysine" evidence="2">
    <location>
        <position position="107"/>
    </location>
</feature>
<feature type="modified residue" description="N6-acetyllysine; alternate" evidence="2">
    <location>
        <position position="117"/>
    </location>
</feature>
<feature type="modified residue" description="N6-succinyllysine; alternate" evidence="3">
    <location>
        <position position="117"/>
    </location>
</feature>
<feature type="modified residue" description="Phosphoserine" evidence="2">
    <location>
        <position position="119"/>
    </location>
</feature>
<feature type="modified residue" description="Phosphothreonine" evidence="2">
    <location>
        <position position="129"/>
    </location>
</feature>
<feature type="modified residue" description="Phosphoserine" evidence="2">
    <location>
        <position position="133"/>
    </location>
</feature>
<feature type="modified residue" description="Phosphothreonine" evidence="2">
    <location>
        <position position="147"/>
    </location>
</feature>
<feature type="modified residue" description="Phosphoserine; by CK2" evidence="2">
    <location>
        <position position="162"/>
    </location>
</feature>
<accession>Q717R8</accession>
<reference key="1">
    <citation type="submission" date="2002-09" db="EMBL/GenBank/DDBJ databases">
        <authorList>
            <person name="Kenoutis C."/>
            <person name="Katinakis P."/>
            <person name="Argyrokastritis A."/>
            <person name="Rogdakis E."/>
        </authorList>
    </citation>
    <scope>NUCLEOTIDE SEQUENCE [MRNA]</scope>
    <source>
        <strain>Dorset</strain>
        <tissue>Adipose tissue</tissue>
    </source>
</reference>
<name>EF1D_SHEEP</name>
<evidence type="ECO:0000250" key="1"/>
<evidence type="ECO:0000250" key="2">
    <source>
        <dbReference type="UniProtKB" id="P29692"/>
    </source>
</evidence>
<evidence type="ECO:0000250" key="3">
    <source>
        <dbReference type="UniProtKB" id="P57776"/>
    </source>
</evidence>
<evidence type="ECO:0000250" key="4">
    <source>
        <dbReference type="UniProtKB" id="Q68FR9"/>
    </source>
</evidence>
<evidence type="ECO:0000256" key="5">
    <source>
        <dbReference type="SAM" id="MobiDB-lite"/>
    </source>
</evidence>
<evidence type="ECO:0000305" key="6"/>